<gene>
    <name evidence="6" type="primary">INSIG1</name>
</gene>
<comment type="function">
    <text evidence="2">Oxysterol-binding protein that mediates feedback control of cholesterol synthesis by controlling both endoplasmic reticulum to Golgi transport of SCAP and degradation of HMGCR. Acts as a negative regulator of cholesterol biosynthesis by mediating the retention of the SCAP-SREBP complex in the endoplasmic reticulum, thereby blocking the processing of sterol regulatory element-binding proteins (SREBPs) SREBF1/SREBP1 and SREBF2/SREBP2. Binds oxysterol, including 25-hydroxycholesterol, regulating interaction with SCAP and retention of the SCAP-SREBP complex in the endoplasmic reticulum. In presence of oxysterol, interacts with SCAP, retaining the SCAP-SREBP complex in the endoplasmic reticulum, thereby preventing SCAP from escorting SREBF1/SREBP1 and SREBF2/SREBP2 to the Golgi. Sterol deprivation or phosphorylation by PCK1 reduce oxysterol-binding, disrupting the interaction between INSIG1 and SCAP, thereby promoting Golgi transport of the SCAP-SREBP complex, followed by processing and nuclear translocation of SREBF1/SREBP1 and SREBF2/SREBP2. Also regulates cholesterol synthesis by regulating degradation of HMGCR: initiates the sterol-mediated ubiquitin-mediated endoplasmic reticulum-associated degradation (ERAD) of HMGCR via recruitment of the reductase to the ubiquitin ligases AMFR/gp78 and/or RNF139. Also regulates degradation of SOAT2/ACAT2 when the lipid levels are low: initiates the ubiquitin-mediated degradation of SOAT2/ACAT2 via recruitment of the ubiquitin ligases AMFR/gp78.</text>
</comment>
<comment type="subunit">
    <text evidence="2 3">Interacts with SCAP; interaction is direct and only takes place in the presence of sterols; it prevents interaction between SCAP and the coat protein complex II (COPII) (By similarity). Associates with the SCAP-SREBP complex (composed of SCAP and SREBF1/SREBP1 or SREBF2/SREBP2); association is mediated via its interaction with SCAP and only takes place in the presence of sterols. Interaction with SCAP is mutually exclusive with PAQR3. Interacts with HMGCR (via its SSD); the interaction, accelerated by sterols, leads to the recruitment of HMGCR to AMFR/gp78 for its ubiquitination by the sterol-mediated ERAD pathway. Interacts with AMFR/gp78 (via its membrane domain); the interaction recruits HMCR at the ER membrane for its ubiquitination and degradation by the sterol-mediated ERAD pathway. Interacts with SOAT2/ACAT2; leading to promote recruitment of AMFR/gp78 and subsequent ubiquitination of SOAT2/ACAT2. Interacts with RNF139. Interacts with RNF145 (By similarity).</text>
</comment>
<comment type="subcellular location">
    <subcellularLocation>
        <location evidence="2">Endoplasmic reticulum membrane</location>
        <topology evidence="2">Multi-pass membrane protein</topology>
    </subcellularLocation>
</comment>
<comment type="domain">
    <text evidence="2">The KxHxx motif mediates association with the coatomer complex.</text>
</comment>
<comment type="domain">
    <text evidence="4">Binds oxysterols in a pocket within their transmembrane domains and interacts with SCAP via transmembrane domains 3 and 4.</text>
</comment>
<comment type="PTM">
    <text evidence="2">Phosphorylation at Ser-187 by PCK1 reduces binding to oxysterol, disrupting the interaction between INSIG1 and SCAP, thereby promoting nuclear translocation of SREBP proteins (SREBF1/SREBP1 or SREBF2/SREBP2) and subsequent transcription of downstream lipogenesis-related genes.</text>
</comment>
<comment type="PTM">
    <text evidence="2">Ubiquitinated by AMFR/gp78 in response to sterol deprivation, leading to its degradation: when the SCAP-SREBP complex becomes dissociated from INSIG1, INSIG1 is then ubiquitinated and degraded in proteasomes. Although ubiquitination is required for rapid INSIG1 degradation, it is not required for release of the SCAP-SREBP complex. Ubiquitinated by RNF139.</text>
</comment>
<comment type="similarity">
    <text evidence="7">Belongs to the INSIG family.</text>
</comment>
<reference key="1">
    <citation type="journal article" date="2002" name="Proc. Natl. Acad. Sci. U.S.A.">
        <title>Insig-2, a second endoplasmic reticulum protein that binds SCAP and blocks export of sterol regulatory element-binding proteins.</title>
        <authorList>
            <person name="Yabe D."/>
            <person name="Brown M.S."/>
            <person name="Goldstein J.L."/>
        </authorList>
    </citation>
    <scope>NUCLEOTIDE SEQUENCE [MRNA]</scope>
</reference>
<organism>
    <name type="scientific">Cricetulus griseus</name>
    <name type="common">Chinese hamster</name>
    <name type="synonym">Cricetulus barabensis griseus</name>
    <dbReference type="NCBI Taxonomy" id="10029"/>
    <lineage>
        <taxon>Eukaryota</taxon>
        <taxon>Metazoa</taxon>
        <taxon>Chordata</taxon>
        <taxon>Craniata</taxon>
        <taxon>Vertebrata</taxon>
        <taxon>Euteleostomi</taxon>
        <taxon>Mammalia</taxon>
        <taxon>Eutheria</taxon>
        <taxon>Euarchontoglires</taxon>
        <taxon>Glires</taxon>
        <taxon>Rodentia</taxon>
        <taxon>Myomorpha</taxon>
        <taxon>Muroidea</taxon>
        <taxon>Cricetidae</taxon>
        <taxon>Cricetinae</taxon>
        <taxon>Cricetulus</taxon>
    </lineage>
</organism>
<feature type="chain" id="PRO_0000191674" description="Insulin-induced gene 1 protein">
    <location>
        <begin position="1"/>
        <end position="257"/>
    </location>
</feature>
<feature type="topological domain" description="Cytoplasmic" evidence="2">
    <location>
        <begin position="1"/>
        <end position="64"/>
    </location>
</feature>
<feature type="transmembrane region" description="Helical; Name=1" evidence="1">
    <location>
        <begin position="65"/>
        <end position="87"/>
    </location>
</feature>
<feature type="topological domain" description="Extracellular" evidence="7">
    <location>
        <begin position="88"/>
        <end position="106"/>
    </location>
</feature>
<feature type="transmembrane region" description="Helical; Name=2" evidence="1">
    <location>
        <begin position="107"/>
        <end position="124"/>
    </location>
</feature>
<feature type="topological domain" description="Cytoplasmic" evidence="7">
    <location>
        <begin position="125"/>
        <end position="139"/>
    </location>
</feature>
<feature type="transmembrane region" description="Helical; Name=3" evidence="1">
    <location>
        <begin position="140"/>
        <end position="162"/>
    </location>
</feature>
<feature type="topological domain" description="Extracellular" evidence="7">
    <location>
        <begin position="163"/>
        <end position="165"/>
    </location>
</feature>
<feature type="transmembrane region" description="Helical; Name=4" evidence="1">
    <location>
        <begin position="166"/>
        <end position="184"/>
    </location>
</feature>
<feature type="topological domain" description="Cytoplasmic" evidence="2">
    <location>
        <begin position="185"/>
        <end position="189"/>
    </location>
</feature>
<feature type="transmembrane region" description="Helical; Name=5" evidence="1">
    <location>
        <begin position="190"/>
        <end position="211"/>
    </location>
</feature>
<feature type="topological domain" description="Extracellular" evidence="7">
    <location>
        <begin position="212"/>
        <end position="225"/>
    </location>
</feature>
<feature type="transmembrane region" description="Helical; Name=6" evidence="1">
    <location>
        <begin position="226"/>
        <end position="243"/>
    </location>
</feature>
<feature type="topological domain" description="Cytoplasmic" evidence="2">
    <location>
        <begin position="244"/>
        <end position="257"/>
    </location>
</feature>
<feature type="region of interest" description="Disordered" evidence="5">
    <location>
        <begin position="32"/>
        <end position="54"/>
    </location>
</feature>
<feature type="short sequence motif" description="KxHxx" evidence="2">
    <location>
        <begin position="251"/>
        <end position="257"/>
    </location>
</feature>
<feature type="site" description="Required for the recognition of 25-hydroxycholesterol" evidence="4">
    <location>
        <position position="151"/>
    </location>
</feature>
<feature type="modified residue" description="Phosphoserine" evidence="2">
    <location>
        <position position="187"/>
    </location>
</feature>
<feature type="cross-link" description="Glycyl lysine isopeptide (Lys-Gly) (interchain with G-Cter in ubiquitin)" evidence="2">
    <location>
        <position position="136"/>
    </location>
</feature>
<feature type="cross-link" description="Glycyl lysine isopeptide (Lys-Gly) (interchain with G-Cter in ubiquitin)" evidence="2">
    <location>
        <position position="138"/>
    </location>
</feature>
<protein>
    <recommendedName>
        <fullName evidence="6">Insulin-induced gene 1 protein</fullName>
        <shortName evidence="6">INSIG-1</shortName>
    </recommendedName>
</protein>
<sequence>MPRLHDHVWSCSGSGAARPHSLPRGMIAAARCPQGSGAPEPAPRSPRAGTAGCGARPGSWHHDLVQRSLVLFSFGVVLALVLNLLQIQRNVTLFPDEVIATIFSSAWWVPPCCGTAAAVVGLLYPCIDSHLGEPHKFKREWASVMRCIAVFVGINHASAKLDFANNVQLSLTLAALSLGLWWTFDRSRSGLGLGITIAFLATLITQFLVYNGVYQYTSPDFLYIRSWLPCIFFSGGVTVGNIGRQLAMGVPEKPHSD</sequence>
<accession>Q8CFA6</accession>
<evidence type="ECO:0000250" key="1">
    <source>
        <dbReference type="UniProtKB" id="A1T557"/>
    </source>
</evidence>
<evidence type="ECO:0000250" key="2">
    <source>
        <dbReference type="UniProtKB" id="O15503"/>
    </source>
</evidence>
<evidence type="ECO:0000250" key="3">
    <source>
        <dbReference type="UniProtKB" id="Q8BGI3"/>
    </source>
</evidence>
<evidence type="ECO:0000250" key="4">
    <source>
        <dbReference type="UniProtKB" id="Q9Y5U4"/>
    </source>
</evidence>
<evidence type="ECO:0000256" key="5">
    <source>
        <dbReference type="SAM" id="MobiDB-lite"/>
    </source>
</evidence>
<evidence type="ECO:0000303" key="6">
    <source>
    </source>
</evidence>
<evidence type="ECO:0000305" key="7"/>
<name>INSI1_CRIGR</name>
<dbReference type="EMBL" id="AF527628">
    <property type="protein sequence ID" value="AAN28329.1"/>
    <property type="molecule type" value="mRNA"/>
</dbReference>
<dbReference type="RefSeq" id="NP_001231008.1">
    <property type="nucleotide sequence ID" value="NM_001244079.1"/>
</dbReference>
<dbReference type="SMR" id="Q8CFA6"/>
<dbReference type="CORUM" id="Q8CFA6"/>
<dbReference type="PaxDb" id="10029-NP_001231008.1"/>
<dbReference type="Ensembl" id="ENSCGRT00001014299.1">
    <property type="protein sequence ID" value="ENSCGRP00001010079.1"/>
    <property type="gene ID" value="ENSCGRG00001012058.1"/>
</dbReference>
<dbReference type="GeneID" id="100689080"/>
<dbReference type="KEGG" id="cge:100689080"/>
<dbReference type="CTD" id="3638"/>
<dbReference type="eggNOG" id="KOG4363">
    <property type="taxonomic scope" value="Eukaryota"/>
</dbReference>
<dbReference type="GeneTree" id="ENSGT00580000081600"/>
<dbReference type="OrthoDB" id="205546at2759"/>
<dbReference type="Proteomes" id="UP000694386">
    <property type="component" value="Unplaced"/>
</dbReference>
<dbReference type="Proteomes" id="UP001108280">
    <property type="component" value="Chromosome 8"/>
</dbReference>
<dbReference type="GO" id="GO:0032937">
    <property type="term" value="C:SREBP-SCAP-Insig complex"/>
    <property type="evidence" value="ECO:0007669"/>
    <property type="project" value="TreeGrafter"/>
</dbReference>
<dbReference type="GO" id="GO:0008142">
    <property type="term" value="F:oxysterol binding"/>
    <property type="evidence" value="ECO:0000250"/>
    <property type="project" value="UniProtKB"/>
</dbReference>
<dbReference type="GO" id="GO:0032869">
    <property type="term" value="P:cellular response to insulin stimulus"/>
    <property type="evidence" value="ECO:0007669"/>
    <property type="project" value="TreeGrafter"/>
</dbReference>
<dbReference type="GO" id="GO:0006695">
    <property type="term" value="P:cholesterol biosynthetic process"/>
    <property type="evidence" value="ECO:0007669"/>
    <property type="project" value="TreeGrafter"/>
</dbReference>
<dbReference type="GO" id="GO:0032933">
    <property type="term" value="P:SREBP signaling pathway"/>
    <property type="evidence" value="ECO:0007669"/>
    <property type="project" value="TreeGrafter"/>
</dbReference>
<dbReference type="GO" id="GO:0036316">
    <property type="term" value="P:SREBP-SCAP complex retention in endoplasmic reticulum"/>
    <property type="evidence" value="ECO:0007669"/>
    <property type="project" value="TreeGrafter"/>
</dbReference>
<dbReference type="InterPro" id="IPR025929">
    <property type="entry name" value="INSIG_fam"/>
</dbReference>
<dbReference type="PANTHER" id="PTHR15301">
    <property type="entry name" value="INSULIN-INDUCED GENE 1"/>
    <property type="match status" value="1"/>
</dbReference>
<dbReference type="PANTHER" id="PTHR15301:SF11">
    <property type="entry name" value="INSULIN-INDUCED GENE 1 PROTEIN"/>
    <property type="match status" value="1"/>
</dbReference>
<dbReference type="Pfam" id="PF07281">
    <property type="entry name" value="INSIG"/>
    <property type="match status" value="1"/>
</dbReference>
<proteinExistence type="evidence at transcript level"/>
<keyword id="KW-0153">Cholesterol metabolism</keyword>
<keyword id="KW-0256">Endoplasmic reticulum</keyword>
<keyword id="KW-1017">Isopeptide bond</keyword>
<keyword id="KW-0443">Lipid metabolism</keyword>
<keyword id="KW-0446">Lipid-binding</keyword>
<keyword id="KW-0472">Membrane</keyword>
<keyword id="KW-0597">Phosphoprotein</keyword>
<keyword id="KW-0753">Steroid metabolism</keyword>
<keyword id="KW-1207">Sterol metabolism</keyword>
<keyword id="KW-0812">Transmembrane</keyword>
<keyword id="KW-1133">Transmembrane helix</keyword>
<keyword id="KW-0832">Ubl conjugation</keyword>